<gene>
    <name type="primary">mdh</name>
    <name type="ordered locus">MM_1966</name>
</gene>
<comment type="function">
    <text evidence="1">Catalyzes the reversible oxidation of malate to oxaloacetate.</text>
</comment>
<comment type="catalytic activity">
    <reaction evidence="1">
        <text>(S)-malate + NAD(+) = oxaloacetate + NADH + H(+)</text>
        <dbReference type="Rhea" id="RHEA:21432"/>
        <dbReference type="ChEBI" id="CHEBI:15378"/>
        <dbReference type="ChEBI" id="CHEBI:15589"/>
        <dbReference type="ChEBI" id="CHEBI:16452"/>
        <dbReference type="ChEBI" id="CHEBI:57540"/>
        <dbReference type="ChEBI" id="CHEBI:57945"/>
        <dbReference type="EC" id="1.1.1.37"/>
    </reaction>
</comment>
<comment type="similarity">
    <text evidence="3">Belongs to the LDH/MDH superfamily.</text>
</comment>
<organism>
    <name type="scientific">Methanosarcina mazei (strain ATCC BAA-159 / DSM 3647 / Goe1 / Go1 / JCM 11833 / OCM 88)</name>
    <name type="common">Methanosarcina frisia</name>
    <dbReference type="NCBI Taxonomy" id="192952"/>
    <lineage>
        <taxon>Archaea</taxon>
        <taxon>Methanobacteriati</taxon>
        <taxon>Methanobacteriota</taxon>
        <taxon>Stenosarchaea group</taxon>
        <taxon>Methanomicrobia</taxon>
        <taxon>Methanosarcinales</taxon>
        <taxon>Methanosarcinaceae</taxon>
        <taxon>Methanosarcina</taxon>
    </lineage>
</organism>
<protein>
    <recommendedName>
        <fullName evidence="1">Malate dehydrogenase</fullName>
        <ecNumber evidence="1">1.1.1.37</ecNumber>
    </recommendedName>
</protein>
<proteinExistence type="inferred from homology"/>
<name>MDH_METMA</name>
<accession>Q8PVJ7</accession>
<sequence length="307" mass="32786">MVKISVIGAGNVGSTTVQRLAELEPGEIVMTDIVEGMPQGKALDLMQAGAINGYDTRITGTNDYADIANSDLVIITAGIARKPGMSREDLIKTNSKIIGDVAGNIAKYAPNSIVINVTNPLDIITYVAMKATGFDPEKVFGMSGVLDAGRFASFIAEELKCSKRDVEAMVIGGHGDLMVPLPQYTTVSGIPLPELLPEKTIDRLVERTVNGGAEIVELLKQGSAFYAPSAAIVRMAEAVIKDSRRVLPASAYLEGQYGQKGIYFGVPVKLGANGIEEILELKLEDSQCEILKKSSETIRKGISKLEI</sequence>
<keyword id="KW-0520">NAD</keyword>
<keyword id="KW-0560">Oxidoreductase</keyword>
<keyword id="KW-0816">Tricarboxylic acid cycle</keyword>
<reference key="1">
    <citation type="journal article" date="2002" name="J. Mol. Microbiol. Biotechnol.">
        <title>The genome of Methanosarcina mazei: evidence for lateral gene transfer between Bacteria and Archaea.</title>
        <authorList>
            <person name="Deppenmeier U."/>
            <person name="Johann A."/>
            <person name="Hartsch T."/>
            <person name="Merkl R."/>
            <person name="Schmitz R.A."/>
            <person name="Martinez-Arias R."/>
            <person name="Henne A."/>
            <person name="Wiezer A."/>
            <person name="Baeumer S."/>
            <person name="Jacobi C."/>
            <person name="Brueggemann H."/>
            <person name="Lienard T."/>
            <person name="Christmann A."/>
            <person name="Boemecke M."/>
            <person name="Steckel S."/>
            <person name="Bhattacharyya A."/>
            <person name="Lykidis A."/>
            <person name="Overbeek R."/>
            <person name="Klenk H.-P."/>
            <person name="Gunsalus R.P."/>
            <person name="Fritz H.-J."/>
            <person name="Gottschalk G."/>
        </authorList>
    </citation>
    <scope>NUCLEOTIDE SEQUENCE [LARGE SCALE GENOMIC DNA]</scope>
    <source>
        <strain>ATCC BAA-159 / DSM 3647 / Goe1 / Go1 / JCM 11833 / OCM 88</strain>
    </source>
</reference>
<evidence type="ECO:0000250" key="1">
    <source>
        <dbReference type="UniProtKB" id="O08349"/>
    </source>
</evidence>
<evidence type="ECO:0000250" key="2">
    <source>
        <dbReference type="UniProtKB" id="P61889"/>
    </source>
</evidence>
<evidence type="ECO:0000305" key="3"/>
<feature type="chain" id="PRO_0000113487" description="Malate dehydrogenase">
    <location>
        <begin position="1"/>
        <end position="307"/>
    </location>
</feature>
<feature type="active site" description="Proton acceptor" evidence="2">
    <location>
        <position position="174"/>
    </location>
</feature>
<feature type="binding site" evidence="1">
    <location>
        <begin position="8"/>
        <end position="13"/>
    </location>
    <ligand>
        <name>NAD(+)</name>
        <dbReference type="ChEBI" id="CHEBI:57540"/>
    </ligand>
</feature>
<feature type="binding site" evidence="1">
    <location>
        <position position="32"/>
    </location>
    <ligand>
        <name>NAD(+)</name>
        <dbReference type="ChEBI" id="CHEBI:57540"/>
    </ligand>
</feature>
<feature type="binding site" evidence="2">
    <location>
        <position position="81"/>
    </location>
    <ligand>
        <name>substrate</name>
    </ligand>
</feature>
<feature type="binding site" evidence="2">
    <location>
        <position position="87"/>
    </location>
    <ligand>
        <name>substrate</name>
    </ligand>
</feature>
<feature type="binding site" evidence="1">
    <location>
        <position position="94"/>
    </location>
    <ligand>
        <name>NAD(+)</name>
        <dbReference type="ChEBI" id="CHEBI:57540"/>
    </ligand>
</feature>
<feature type="binding site" evidence="1">
    <location>
        <begin position="117"/>
        <end position="119"/>
    </location>
    <ligand>
        <name>NAD(+)</name>
        <dbReference type="ChEBI" id="CHEBI:57540"/>
    </ligand>
</feature>
<feature type="binding site" evidence="2">
    <location>
        <position position="119"/>
    </location>
    <ligand>
        <name>substrate</name>
    </ligand>
</feature>
<feature type="binding site" evidence="2">
    <location>
        <position position="150"/>
    </location>
    <ligand>
        <name>substrate</name>
    </ligand>
</feature>
<dbReference type="EC" id="1.1.1.37" evidence="1"/>
<dbReference type="EMBL" id="AE008384">
    <property type="protein sequence ID" value="AAM31662.1"/>
    <property type="molecule type" value="Genomic_DNA"/>
</dbReference>
<dbReference type="RefSeq" id="WP_011033898.1">
    <property type="nucleotide sequence ID" value="NC_003901.1"/>
</dbReference>
<dbReference type="SMR" id="Q8PVJ7"/>
<dbReference type="GeneID" id="82161021"/>
<dbReference type="KEGG" id="mma:MM_1966"/>
<dbReference type="PATRIC" id="fig|192952.21.peg.2265"/>
<dbReference type="eggNOG" id="arCOG00246">
    <property type="taxonomic scope" value="Archaea"/>
</dbReference>
<dbReference type="HOGENOM" id="CLU_045401_2_1_2"/>
<dbReference type="Proteomes" id="UP000000595">
    <property type="component" value="Chromosome"/>
</dbReference>
<dbReference type="GO" id="GO:0004459">
    <property type="term" value="F:L-lactate dehydrogenase activity"/>
    <property type="evidence" value="ECO:0007669"/>
    <property type="project" value="TreeGrafter"/>
</dbReference>
<dbReference type="GO" id="GO:0030060">
    <property type="term" value="F:L-malate dehydrogenase (NAD+) activity"/>
    <property type="evidence" value="ECO:0007669"/>
    <property type="project" value="UniProtKB-EC"/>
</dbReference>
<dbReference type="GO" id="GO:0006089">
    <property type="term" value="P:lactate metabolic process"/>
    <property type="evidence" value="ECO:0007669"/>
    <property type="project" value="TreeGrafter"/>
</dbReference>
<dbReference type="GO" id="GO:0006099">
    <property type="term" value="P:tricarboxylic acid cycle"/>
    <property type="evidence" value="ECO:0007669"/>
    <property type="project" value="UniProtKB-KW"/>
</dbReference>
<dbReference type="CDD" id="cd01339">
    <property type="entry name" value="LDH-like_MDH"/>
    <property type="match status" value="1"/>
</dbReference>
<dbReference type="FunFam" id="3.40.50.720:FF:000018">
    <property type="entry name" value="Malate dehydrogenase"/>
    <property type="match status" value="1"/>
</dbReference>
<dbReference type="FunFam" id="3.90.110.10:FF:000004">
    <property type="entry name" value="Malate dehydrogenase"/>
    <property type="match status" value="1"/>
</dbReference>
<dbReference type="Gene3D" id="3.90.110.10">
    <property type="entry name" value="Lactate dehydrogenase/glycoside hydrolase, family 4, C-terminal"/>
    <property type="match status" value="1"/>
</dbReference>
<dbReference type="Gene3D" id="3.40.50.720">
    <property type="entry name" value="NAD(P)-binding Rossmann-like Domain"/>
    <property type="match status" value="1"/>
</dbReference>
<dbReference type="HAMAP" id="MF_00487">
    <property type="entry name" value="Malate_dehydrog_3"/>
    <property type="match status" value="1"/>
</dbReference>
<dbReference type="InterPro" id="IPR001557">
    <property type="entry name" value="L-lactate/malate_DH"/>
</dbReference>
<dbReference type="InterPro" id="IPR022383">
    <property type="entry name" value="Lactate/malate_DH_C"/>
</dbReference>
<dbReference type="InterPro" id="IPR001236">
    <property type="entry name" value="Lactate/malate_DH_N"/>
</dbReference>
<dbReference type="InterPro" id="IPR015955">
    <property type="entry name" value="Lactate_DH/Glyco_Ohase_4_C"/>
</dbReference>
<dbReference type="InterPro" id="IPR011275">
    <property type="entry name" value="Malate_DH_type3"/>
</dbReference>
<dbReference type="InterPro" id="IPR036291">
    <property type="entry name" value="NAD(P)-bd_dom_sf"/>
</dbReference>
<dbReference type="NCBIfam" id="TIGR01763">
    <property type="entry name" value="MalateDH_bact"/>
    <property type="match status" value="1"/>
</dbReference>
<dbReference type="NCBIfam" id="NF004863">
    <property type="entry name" value="PRK06223.1"/>
    <property type="match status" value="1"/>
</dbReference>
<dbReference type="PANTHER" id="PTHR43128">
    <property type="entry name" value="L-2-HYDROXYCARBOXYLATE DEHYDROGENASE (NAD(P)(+))"/>
    <property type="match status" value="1"/>
</dbReference>
<dbReference type="PANTHER" id="PTHR43128:SF16">
    <property type="entry name" value="L-LACTATE DEHYDROGENASE"/>
    <property type="match status" value="1"/>
</dbReference>
<dbReference type="Pfam" id="PF02866">
    <property type="entry name" value="Ldh_1_C"/>
    <property type="match status" value="1"/>
</dbReference>
<dbReference type="Pfam" id="PF00056">
    <property type="entry name" value="Ldh_1_N"/>
    <property type="match status" value="1"/>
</dbReference>
<dbReference type="PIRSF" id="PIRSF000102">
    <property type="entry name" value="Lac_mal_DH"/>
    <property type="match status" value="1"/>
</dbReference>
<dbReference type="PRINTS" id="PR00086">
    <property type="entry name" value="LLDHDRGNASE"/>
</dbReference>
<dbReference type="SUPFAM" id="SSF56327">
    <property type="entry name" value="LDH C-terminal domain-like"/>
    <property type="match status" value="1"/>
</dbReference>
<dbReference type="SUPFAM" id="SSF51735">
    <property type="entry name" value="NAD(P)-binding Rossmann-fold domains"/>
    <property type="match status" value="1"/>
</dbReference>